<organism>
    <name type="scientific">Rattus norvegicus</name>
    <name type="common">Rat</name>
    <dbReference type="NCBI Taxonomy" id="10116"/>
    <lineage>
        <taxon>Eukaryota</taxon>
        <taxon>Metazoa</taxon>
        <taxon>Chordata</taxon>
        <taxon>Craniata</taxon>
        <taxon>Vertebrata</taxon>
        <taxon>Euteleostomi</taxon>
        <taxon>Mammalia</taxon>
        <taxon>Eutheria</taxon>
        <taxon>Euarchontoglires</taxon>
        <taxon>Glires</taxon>
        <taxon>Rodentia</taxon>
        <taxon>Myomorpha</taxon>
        <taxon>Muroidea</taxon>
        <taxon>Muridae</taxon>
        <taxon>Murinae</taxon>
        <taxon>Rattus</taxon>
    </lineage>
</organism>
<name>TDRD9_RAT</name>
<proteinExistence type="evidence at transcript level"/>
<protein>
    <recommendedName>
        <fullName evidence="7">ATP-dependent RNA helicase TDRD9</fullName>
        <ecNumber evidence="1">3.6.4.13</ecNumber>
    </recommendedName>
    <alternativeName>
        <fullName evidence="7">Tudor domain-containing protein 9</fullName>
    </alternativeName>
</protein>
<comment type="function">
    <text evidence="1">ATP-binding RNA helicase which plays a central role during spermatogenesis by repressing transposable elements and preventing their mobilization, which is essential for the germline integrity. Acts via the piRNA metabolic process, which mediates the repression of transposable elements during meiosis by forming complexes composed of piRNAs and Piwi proteins and governs the methylation and subsequent repression of transposons. Acts downstream of piRNA biogenesis: exclusively required for transposon silencing in the nucleus, suggesting that it acts as a nuclear effector in the nucleus together with PIWIL4.</text>
</comment>
<comment type="catalytic activity">
    <reaction evidence="1">
        <text>ATP + H2O = ADP + phosphate + H(+)</text>
        <dbReference type="Rhea" id="RHEA:13065"/>
        <dbReference type="ChEBI" id="CHEBI:15377"/>
        <dbReference type="ChEBI" id="CHEBI:15378"/>
        <dbReference type="ChEBI" id="CHEBI:30616"/>
        <dbReference type="ChEBI" id="CHEBI:43474"/>
        <dbReference type="ChEBI" id="CHEBI:456216"/>
        <dbReference type="EC" id="3.6.4.13"/>
    </reaction>
</comment>
<comment type="subunit">
    <text evidence="1">Interacts with piRNA-associated proteins PIWIL1 and PIWIL4.</text>
</comment>
<comment type="subcellular location">
    <subcellularLocation>
        <location evidence="1">Cytoplasm</location>
    </subcellularLocation>
    <subcellularLocation>
        <location evidence="1">Nucleus</location>
    </subcellularLocation>
    <text evidence="1">Component of the nuage, also named P granule, a germ-cell-specific organelle required to repress transposon activity during meiosis. Specifically localizes to piP-bodies, a subset of the nuage which contains secondary piRNAs. PIWIL2 is required for its localization to piP-bodies.</text>
</comment>
<comment type="alternative products">
    <event type="alternative splicing"/>
    <isoform>
        <id>Q3MHU3-1</id>
        <name>1</name>
        <sequence type="displayed"/>
    </isoform>
    <isoform>
        <id>Q3MHU3-2</id>
        <name>2</name>
        <sequence type="described" ref="VSP_033556 VSP_033557"/>
    </isoform>
</comment>
<comment type="similarity">
    <text evidence="7">Belongs to the DEAD box helicase family. DEAH subfamily.</text>
</comment>
<dbReference type="EC" id="3.6.4.13" evidence="1"/>
<dbReference type="EMBL" id="AABR03050289">
    <property type="status" value="NOT_ANNOTATED_CDS"/>
    <property type="molecule type" value="Genomic_DNA"/>
</dbReference>
<dbReference type="EMBL" id="AABR03048647">
    <property type="status" value="NOT_ANNOTATED_CDS"/>
    <property type="molecule type" value="Genomic_DNA"/>
</dbReference>
<dbReference type="EMBL" id="AABR03049552">
    <property type="status" value="NOT_ANNOTATED_CDS"/>
    <property type="molecule type" value="Genomic_DNA"/>
</dbReference>
<dbReference type="EMBL" id="AABR03049859">
    <property type="status" value="NOT_ANNOTATED_CDS"/>
    <property type="molecule type" value="Genomic_DNA"/>
</dbReference>
<dbReference type="EMBL" id="AABR03050293">
    <property type="status" value="NOT_ANNOTATED_CDS"/>
    <property type="molecule type" value="Genomic_DNA"/>
</dbReference>
<dbReference type="EMBL" id="AABR03051941">
    <property type="status" value="NOT_ANNOTATED_CDS"/>
    <property type="molecule type" value="Genomic_DNA"/>
</dbReference>
<dbReference type="EMBL" id="BC104675">
    <property type="protein sequence ID" value="AAI04676.1"/>
    <property type="molecule type" value="mRNA"/>
</dbReference>
<dbReference type="RefSeq" id="NP_001406506.1">
    <molecule id="Q3MHU3-1"/>
    <property type="nucleotide sequence ID" value="NM_001419577.1"/>
</dbReference>
<dbReference type="RefSeq" id="XP_001072421.2">
    <property type="nucleotide sequence ID" value="XM_001072421.4"/>
</dbReference>
<dbReference type="RefSeq" id="XP_008763208.1">
    <property type="nucleotide sequence ID" value="XM_008764986.1"/>
</dbReference>
<dbReference type="SMR" id="Q3MHU3"/>
<dbReference type="FunCoup" id="Q3MHU3">
    <property type="interactions" value="75"/>
</dbReference>
<dbReference type="STRING" id="10116.ENSRNOP00000073728"/>
<dbReference type="PhosphoSitePlus" id="Q3MHU3"/>
<dbReference type="jPOST" id="Q3MHU3"/>
<dbReference type="PaxDb" id="10116-ENSRNOP00000017118"/>
<dbReference type="Ensembl" id="ENSRNOT00000086594.2">
    <molecule id="Q3MHU3-1"/>
    <property type="protein sequence ID" value="ENSRNOP00000073728.1"/>
    <property type="gene ID" value="ENSRNOG00000053631.2"/>
</dbReference>
<dbReference type="GeneID" id="299343"/>
<dbReference type="UCSC" id="RGD:1306942">
    <molecule id="Q3MHU3-1"/>
    <property type="organism name" value="rat"/>
</dbReference>
<dbReference type="AGR" id="RGD:1306942"/>
<dbReference type="RGD" id="1306942">
    <property type="gene designation" value="Tdrd9"/>
</dbReference>
<dbReference type="eggNOG" id="KOG0920">
    <property type="taxonomic scope" value="Eukaryota"/>
</dbReference>
<dbReference type="GeneTree" id="ENSGT00940000157035"/>
<dbReference type="HOGENOM" id="CLU_002601_1_0_1"/>
<dbReference type="InParanoid" id="Q3MHU3"/>
<dbReference type="OrthoDB" id="66977at2759"/>
<dbReference type="PhylomeDB" id="Q3MHU3"/>
<dbReference type="TreeFam" id="TF324869"/>
<dbReference type="PRO" id="PR:Q3MHU3"/>
<dbReference type="Proteomes" id="UP000002494">
    <property type="component" value="Chromosome 6"/>
</dbReference>
<dbReference type="Bgee" id="ENSRNOG00000053631">
    <property type="expression patterns" value="Expressed in thymus and 6 other cell types or tissues"/>
</dbReference>
<dbReference type="GO" id="GO:0005737">
    <property type="term" value="C:cytoplasm"/>
    <property type="evidence" value="ECO:0000266"/>
    <property type="project" value="RGD"/>
</dbReference>
<dbReference type="GO" id="GO:0005634">
    <property type="term" value="C:nucleus"/>
    <property type="evidence" value="ECO:0000250"/>
    <property type="project" value="UniProtKB"/>
</dbReference>
<dbReference type="GO" id="GO:0071547">
    <property type="term" value="C:piP-body"/>
    <property type="evidence" value="ECO:0000250"/>
    <property type="project" value="UniProtKB"/>
</dbReference>
<dbReference type="GO" id="GO:0005524">
    <property type="term" value="F:ATP binding"/>
    <property type="evidence" value="ECO:0007669"/>
    <property type="project" value="UniProtKB-KW"/>
</dbReference>
<dbReference type="GO" id="GO:0016887">
    <property type="term" value="F:ATP hydrolysis activity"/>
    <property type="evidence" value="ECO:0000250"/>
    <property type="project" value="UniProtKB"/>
</dbReference>
<dbReference type="GO" id="GO:0004386">
    <property type="term" value="F:helicase activity"/>
    <property type="evidence" value="ECO:0000318"/>
    <property type="project" value="GO_Central"/>
</dbReference>
<dbReference type="GO" id="GO:0003723">
    <property type="term" value="F:RNA binding"/>
    <property type="evidence" value="ECO:0000318"/>
    <property type="project" value="GO_Central"/>
</dbReference>
<dbReference type="GO" id="GO:0003724">
    <property type="term" value="F:RNA helicase activity"/>
    <property type="evidence" value="ECO:0007669"/>
    <property type="project" value="UniProtKB-EC"/>
</dbReference>
<dbReference type="GO" id="GO:0030154">
    <property type="term" value="P:cell differentiation"/>
    <property type="evidence" value="ECO:0007669"/>
    <property type="project" value="UniProtKB-KW"/>
</dbReference>
<dbReference type="GO" id="GO:0009566">
    <property type="term" value="P:fertilization"/>
    <property type="evidence" value="ECO:0000250"/>
    <property type="project" value="UniProtKB"/>
</dbReference>
<dbReference type="GO" id="GO:0007141">
    <property type="term" value="P:male meiosis I"/>
    <property type="evidence" value="ECO:0000250"/>
    <property type="project" value="UniProtKB"/>
</dbReference>
<dbReference type="GO" id="GO:0007140">
    <property type="term" value="P:male meiotic nuclear division"/>
    <property type="evidence" value="ECO:0000250"/>
    <property type="project" value="UniProtKB"/>
</dbReference>
<dbReference type="GO" id="GO:0034587">
    <property type="term" value="P:piRNA processing"/>
    <property type="evidence" value="ECO:0000250"/>
    <property type="project" value="UniProtKB"/>
</dbReference>
<dbReference type="GO" id="GO:0007283">
    <property type="term" value="P:spermatogenesis"/>
    <property type="evidence" value="ECO:0000250"/>
    <property type="project" value="UniProtKB"/>
</dbReference>
<dbReference type="GO" id="GO:0010526">
    <property type="term" value="P:transposable element silencing"/>
    <property type="evidence" value="ECO:0000266"/>
    <property type="project" value="RGD"/>
</dbReference>
<dbReference type="GO" id="GO:0141196">
    <property type="term" value="P:transposable element silencing by piRNA-mediated DNA methylation"/>
    <property type="evidence" value="ECO:0000250"/>
    <property type="project" value="UniProtKB"/>
</dbReference>
<dbReference type="GO" id="GO:0141006">
    <property type="term" value="P:transposable element silencing by piRNA-mediated heterochromatin formation"/>
    <property type="evidence" value="ECO:0000250"/>
    <property type="project" value="UniProtKB"/>
</dbReference>
<dbReference type="CDD" id="cd18791">
    <property type="entry name" value="SF2_C_RHA"/>
    <property type="match status" value="1"/>
</dbReference>
<dbReference type="CDD" id="cd20431">
    <property type="entry name" value="Tudor_TDRD9"/>
    <property type="match status" value="1"/>
</dbReference>
<dbReference type="FunFam" id="2.30.30.140:FF:000073">
    <property type="entry name" value="ATP-dependent RNA helicase TDRD9"/>
    <property type="match status" value="1"/>
</dbReference>
<dbReference type="FunFam" id="3.40.50.300:FF:001113">
    <property type="entry name" value="ATP-dependent RNA helicase TDRD9"/>
    <property type="match status" value="1"/>
</dbReference>
<dbReference type="FunFam" id="1.20.120.1080:FF:000012">
    <property type="entry name" value="putative ATP-dependent RNA helicase TDRD9"/>
    <property type="match status" value="1"/>
</dbReference>
<dbReference type="FunFam" id="3.40.50.300:FF:000946">
    <property type="entry name" value="putative ATP-dependent RNA helicase TDRD9"/>
    <property type="match status" value="1"/>
</dbReference>
<dbReference type="FunFam" id="2.40.50.90:FF:000016">
    <property type="entry name" value="Tudor domain containing 9"/>
    <property type="match status" value="1"/>
</dbReference>
<dbReference type="Gene3D" id="1.20.120.1080">
    <property type="match status" value="1"/>
</dbReference>
<dbReference type="Gene3D" id="2.30.30.140">
    <property type="match status" value="1"/>
</dbReference>
<dbReference type="Gene3D" id="2.40.50.90">
    <property type="match status" value="1"/>
</dbReference>
<dbReference type="Gene3D" id="3.40.50.300">
    <property type="entry name" value="P-loop containing nucleotide triphosphate hydrolases"/>
    <property type="match status" value="2"/>
</dbReference>
<dbReference type="InterPro" id="IPR011545">
    <property type="entry name" value="DEAD/DEAH_box_helicase_dom"/>
</dbReference>
<dbReference type="InterPro" id="IPR007502">
    <property type="entry name" value="Helicase-assoc_dom"/>
</dbReference>
<dbReference type="InterPro" id="IPR014001">
    <property type="entry name" value="Helicase_ATP-bd"/>
</dbReference>
<dbReference type="InterPro" id="IPR001650">
    <property type="entry name" value="Helicase_C-like"/>
</dbReference>
<dbReference type="InterPro" id="IPR027417">
    <property type="entry name" value="P-loop_NTPase"/>
</dbReference>
<dbReference type="InterPro" id="IPR035437">
    <property type="entry name" value="SNase_OB-fold_sf"/>
</dbReference>
<dbReference type="InterPro" id="IPR002999">
    <property type="entry name" value="Tudor"/>
</dbReference>
<dbReference type="InterPro" id="IPR047384">
    <property type="entry name" value="Tudor_TDRD9"/>
</dbReference>
<dbReference type="PANTHER" id="PTHR18934">
    <property type="entry name" value="ATP-DEPENDENT RNA HELICASE"/>
    <property type="match status" value="1"/>
</dbReference>
<dbReference type="PANTHER" id="PTHR18934:SF113">
    <property type="entry name" value="ATP-DEPENDENT RNA HELICASE TDRD9"/>
    <property type="match status" value="1"/>
</dbReference>
<dbReference type="Pfam" id="PF00270">
    <property type="entry name" value="DEAD"/>
    <property type="match status" value="1"/>
</dbReference>
<dbReference type="Pfam" id="PF21010">
    <property type="entry name" value="HA2_C"/>
    <property type="match status" value="1"/>
</dbReference>
<dbReference type="Pfam" id="PF00271">
    <property type="entry name" value="Helicase_C"/>
    <property type="match status" value="1"/>
</dbReference>
<dbReference type="Pfam" id="PF00567">
    <property type="entry name" value="TUDOR"/>
    <property type="match status" value="1"/>
</dbReference>
<dbReference type="SMART" id="SM00487">
    <property type="entry name" value="DEXDc"/>
    <property type="match status" value="1"/>
</dbReference>
<dbReference type="SMART" id="SM00847">
    <property type="entry name" value="HA2"/>
    <property type="match status" value="1"/>
</dbReference>
<dbReference type="SMART" id="SM00490">
    <property type="entry name" value="HELICc"/>
    <property type="match status" value="1"/>
</dbReference>
<dbReference type="SMART" id="SM00333">
    <property type="entry name" value="TUDOR"/>
    <property type="match status" value="1"/>
</dbReference>
<dbReference type="SUPFAM" id="SSF52540">
    <property type="entry name" value="P-loop containing nucleoside triphosphate hydrolases"/>
    <property type="match status" value="1"/>
</dbReference>
<dbReference type="SUPFAM" id="SSF63748">
    <property type="entry name" value="Tudor/PWWP/MBT"/>
    <property type="match status" value="1"/>
</dbReference>
<dbReference type="PROSITE" id="PS51192">
    <property type="entry name" value="HELICASE_ATP_BIND_1"/>
    <property type="match status" value="1"/>
</dbReference>
<dbReference type="PROSITE" id="PS51194">
    <property type="entry name" value="HELICASE_CTER"/>
    <property type="match status" value="1"/>
</dbReference>
<dbReference type="PROSITE" id="PS50304">
    <property type="entry name" value="TUDOR"/>
    <property type="match status" value="1"/>
</dbReference>
<keyword id="KW-0025">Alternative splicing</keyword>
<keyword id="KW-0067">ATP-binding</keyword>
<keyword id="KW-0963">Cytoplasm</keyword>
<keyword id="KW-0217">Developmental protein</keyword>
<keyword id="KW-0221">Differentiation</keyword>
<keyword id="KW-0347">Helicase</keyword>
<keyword id="KW-0378">Hydrolase</keyword>
<keyword id="KW-0469">Meiosis</keyword>
<keyword id="KW-0547">Nucleotide-binding</keyword>
<keyword id="KW-0539">Nucleus</keyword>
<keyword id="KW-1185">Reference proteome</keyword>
<keyword id="KW-0943">RNA-mediated gene silencing</keyword>
<keyword id="KW-0744">Spermatogenesis</keyword>
<gene>
    <name evidence="8" type="primary">Tdrd9</name>
</gene>
<sequence length="1384" mass="156156">MLRKLTVDQINDWFTIGKTVTNVELLGLPPAFPAEAPREEVQRSEEVPSEAPTAQAQDPVKATALARPASAFGRSLSQRSSEVEYINKYRQLEAQELDIYGQDQPPSGPGLRSPLAKISNVACIPETTYKYPDLPINRCKEEVISLIESNSVVIIHGATGSGKSTQLPQYVLDHYTQRSAFCNIVVTQPRKIGASSIARWISKERSWTLGGLVGYQVGLEKTATEDTRLIYMTTGVLLQKIVSAKSLMEFTHVFIDEVHERTEEMDFLLLVVRKLLRTNSRFVKVILMSATINCKQFADYFAVPVQNKMNPAYVFEVEGKPHTIEQYYLNDLGHIYHSGLPPYRLEEPVITKDVYEVAVSLIQMFDDLDMKESGNKTWSGAQFVSERSSVLVFLPGLGEINYMHELLTNMIHKRLQVYPLHSSVTLEEQNNVFLSPVPGYRKIILSTNIAESSVTVPDVKYVIDFCLTRTLVCDEDTNYQSLRLSWASKTSCDQRKGRAGRVSKGYCYRLIHRDFWDSAIPDHVVPEMLRCPLGSTVLKVKLLDMGEPRALLATALSPPSLSDIERTILLLKEVGALAVSGQREDENPHDGELTFLGRVLAQLPVSQQLGKLIVLGHVFGCLDECLIIAAALSLKNFFTMPFRQHLDGYRNKVHFSGSSRSDCLALVEAFRAWQACRQRGELRHPKDELDWGRLNYIQIKRIREVAELYEELKNRISQFNMFVDPRHPVLDQEYPYKQRFILQVVLAGAFYPNYFTFGQPDEEMAVRELAGRDPKTTVVLKHIPPYGFLYYKQLQSLFRQCGQVKSIVFDGAKAFVEFSRNPTERFKTLPAVNLAVKMSQLKVSLELSIHAAEEIEGKVQGGSVSKLRNTRVNVDFQKQTVDPMQVSFNTLDRPRTVADLLLTVDVTEVVEVGHFWGYRIDERNAELLRQLTAEINRLELVPLPIHPHPDLVCLAPFTDYNKESYFRAQILYVSGNSAEVFFVDYGNRSHVDLDLLREIPCQLLELPFQALEFKICKMRPSAKSLICGEHWSGGANGRFAALVSGCPLLVKVFSIVHSVLHVDVYRYSGAQDAVNIRDVLIREGYAELAEESYESKQSYEVLKGFFAKSVDTMPDGSVSSPMKDDEKHLIQILLESFASNRLGAPNCKAVLHGPFNPYELKCHSLTRISKFRCVWIEKESINSVVISDSPADLHQRMLVAASLSVNETGSTMLLRETSLMPHIPGLPALLSMLFAPVMELRVDREGKCYTGVLCGLGWNSTTEAPILPEHDIELAFDVCFNVEDIVEINILRAAINKLACDGPHGPKYLGPERIAQLQENARQKLLGLFCRLKPREKITPQWHEKPYEWNQVDPRLVIEQAEREGGPGKSTCLYQLHTPVVLSP</sequence>
<feature type="chain" id="PRO_0000333815" description="ATP-dependent RNA helicase TDRD9">
    <location>
        <begin position="1"/>
        <end position="1384"/>
    </location>
</feature>
<feature type="domain" description="Helicase ATP-binding" evidence="3">
    <location>
        <begin position="144"/>
        <end position="310"/>
    </location>
</feature>
<feature type="domain" description="Helicase C-terminal" evidence="4">
    <location>
        <begin position="379"/>
        <end position="546"/>
    </location>
</feature>
<feature type="domain" description="Tudor" evidence="2">
    <location>
        <begin position="946"/>
        <end position="1006"/>
    </location>
</feature>
<feature type="region of interest" description="Disordered" evidence="5">
    <location>
        <begin position="35"/>
        <end position="60"/>
    </location>
</feature>
<feature type="short sequence motif" description="DEAH box" evidence="1">
    <location>
        <begin position="256"/>
        <end position="259"/>
    </location>
</feature>
<feature type="compositionally biased region" description="Basic and acidic residues" evidence="5">
    <location>
        <begin position="36"/>
        <end position="46"/>
    </location>
</feature>
<feature type="binding site" evidence="3">
    <location>
        <begin position="157"/>
        <end position="164"/>
    </location>
    <ligand>
        <name>ATP</name>
        <dbReference type="ChEBI" id="CHEBI:30616"/>
    </ligand>
</feature>
<feature type="splice variant" id="VSP_033556" description="In isoform 2." evidence="6">
    <location>
        <begin position="1"/>
        <end position="837"/>
    </location>
</feature>
<feature type="splice variant" id="VSP_033557" description="In isoform 2." evidence="6">
    <original>E</original>
    <variation>EVALCAHTLLLQ</variation>
    <location>
        <position position="908"/>
    </location>
</feature>
<evidence type="ECO:0000250" key="1">
    <source>
        <dbReference type="UniProtKB" id="Q14BI7"/>
    </source>
</evidence>
<evidence type="ECO:0000255" key="2">
    <source>
        <dbReference type="PROSITE-ProRule" id="PRU00211"/>
    </source>
</evidence>
<evidence type="ECO:0000255" key="3">
    <source>
        <dbReference type="PROSITE-ProRule" id="PRU00541"/>
    </source>
</evidence>
<evidence type="ECO:0000255" key="4">
    <source>
        <dbReference type="PROSITE-ProRule" id="PRU00542"/>
    </source>
</evidence>
<evidence type="ECO:0000256" key="5">
    <source>
        <dbReference type="SAM" id="MobiDB-lite"/>
    </source>
</evidence>
<evidence type="ECO:0000303" key="6">
    <source>
    </source>
</evidence>
<evidence type="ECO:0000305" key="7"/>
<evidence type="ECO:0000312" key="8">
    <source>
        <dbReference type="RGD" id="1306942"/>
    </source>
</evidence>
<accession>Q3MHU3</accession>
<reference key="1">
    <citation type="journal article" date="2004" name="Nature">
        <title>Genome sequence of the Brown Norway rat yields insights into mammalian evolution.</title>
        <authorList>
            <person name="Gibbs R.A."/>
            <person name="Weinstock G.M."/>
            <person name="Metzker M.L."/>
            <person name="Muzny D.M."/>
            <person name="Sodergren E.J."/>
            <person name="Scherer S."/>
            <person name="Scott G."/>
            <person name="Steffen D."/>
            <person name="Worley K.C."/>
            <person name="Burch P.E."/>
            <person name="Okwuonu G."/>
            <person name="Hines S."/>
            <person name="Lewis L."/>
            <person name="Deramo C."/>
            <person name="Delgado O."/>
            <person name="Dugan-Rocha S."/>
            <person name="Miner G."/>
            <person name="Morgan M."/>
            <person name="Hawes A."/>
            <person name="Gill R."/>
            <person name="Holt R.A."/>
            <person name="Adams M.D."/>
            <person name="Amanatides P.G."/>
            <person name="Baden-Tillson H."/>
            <person name="Barnstead M."/>
            <person name="Chin S."/>
            <person name="Evans C.A."/>
            <person name="Ferriera S."/>
            <person name="Fosler C."/>
            <person name="Glodek A."/>
            <person name="Gu Z."/>
            <person name="Jennings D."/>
            <person name="Kraft C.L."/>
            <person name="Nguyen T."/>
            <person name="Pfannkoch C.M."/>
            <person name="Sitter C."/>
            <person name="Sutton G.G."/>
            <person name="Venter J.C."/>
            <person name="Woodage T."/>
            <person name="Smith D."/>
            <person name="Lee H.-M."/>
            <person name="Gustafson E."/>
            <person name="Cahill P."/>
            <person name="Kana A."/>
            <person name="Doucette-Stamm L."/>
            <person name="Weinstock K."/>
            <person name="Fechtel K."/>
            <person name="Weiss R.B."/>
            <person name="Dunn D.M."/>
            <person name="Green E.D."/>
            <person name="Blakesley R.W."/>
            <person name="Bouffard G.G."/>
            <person name="De Jong P.J."/>
            <person name="Osoegawa K."/>
            <person name="Zhu B."/>
            <person name="Marra M."/>
            <person name="Schein J."/>
            <person name="Bosdet I."/>
            <person name="Fjell C."/>
            <person name="Jones S."/>
            <person name="Krzywinski M."/>
            <person name="Mathewson C."/>
            <person name="Siddiqui A."/>
            <person name="Wye N."/>
            <person name="McPherson J."/>
            <person name="Zhao S."/>
            <person name="Fraser C.M."/>
            <person name="Shetty J."/>
            <person name="Shatsman S."/>
            <person name="Geer K."/>
            <person name="Chen Y."/>
            <person name="Abramzon S."/>
            <person name="Nierman W.C."/>
            <person name="Havlak P.H."/>
            <person name="Chen R."/>
            <person name="Durbin K.J."/>
            <person name="Egan A."/>
            <person name="Ren Y."/>
            <person name="Song X.-Z."/>
            <person name="Li B."/>
            <person name="Liu Y."/>
            <person name="Qin X."/>
            <person name="Cawley S."/>
            <person name="Cooney A.J."/>
            <person name="D'Souza L.M."/>
            <person name="Martin K."/>
            <person name="Wu J.Q."/>
            <person name="Gonzalez-Garay M.L."/>
            <person name="Jackson A.R."/>
            <person name="Kalafus K.J."/>
            <person name="McLeod M.P."/>
            <person name="Milosavljevic A."/>
            <person name="Virk D."/>
            <person name="Volkov A."/>
            <person name="Wheeler D.A."/>
            <person name="Zhang Z."/>
            <person name="Bailey J.A."/>
            <person name="Eichler E.E."/>
            <person name="Tuzun E."/>
            <person name="Birney E."/>
            <person name="Mongin E."/>
            <person name="Ureta-Vidal A."/>
            <person name="Woodwark C."/>
            <person name="Zdobnov E."/>
            <person name="Bork P."/>
            <person name="Suyama M."/>
            <person name="Torrents D."/>
            <person name="Alexandersson M."/>
            <person name="Trask B.J."/>
            <person name="Young J.M."/>
            <person name="Huang H."/>
            <person name="Wang H."/>
            <person name="Xing H."/>
            <person name="Daniels S."/>
            <person name="Gietzen D."/>
            <person name="Schmidt J."/>
            <person name="Stevens K."/>
            <person name="Vitt U."/>
            <person name="Wingrove J."/>
            <person name="Camara F."/>
            <person name="Mar Alba M."/>
            <person name="Abril J.F."/>
            <person name="Guigo R."/>
            <person name="Smit A."/>
            <person name="Dubchak I."/>
            <person name="Rubin E.M."/>
            <person name="Couronne O."/>
            <person name="Poliakov A."/>
            <person name="Huebner N."/>
            <person name="Ganten D."/>
            <person name="Goesele C."/>
            <person name="Hummel O."/>
            <person name="Kreitler T."/>
            <person name="Lee Y.-A."/>
            <person name="Monti J."/>
            <person name="Schulz H."/>
            <person name="Zimdahl H."/>
            <person name="Himmelbauer H."/>
            <person name="Lehrach H."/>
            <person name="Jacob H.J."/>
            <person name="Bromberg S."/>
            <person name="Gullings-Handley J."/>
            <person name="Jensen-Seaman M.I."/>
            <person name="Kwitek A.E."/>
            <person name="Lazar J."/>
            <person name="Pasko D."/>
            <person name="Tonellato P.J."/>
            <person name="Twigger S."/>
            <person name="Ponting C.P."/>
            <person name="Duarte J.M."/>
            <person name="Rice S."/>
            <person name="Goodstadt L."/>
            <person name="Beatson S.A."/>
            <person name="Emes R.D."/>
            <person name="Winter E.E."/>
            <person name="Webber C."/>
            <person name="Brandt P."/>
            <person name="Nyakatura G."/>
            <person name="Adetobi M."/>
            <person name="Chiaromonte F."/>
            <person name="Elnitski L."/>
            <person name="Eswara P."/>
            <person name="Hardison R.C."/>
            <person name="Hou M."/>
            <person name="Kolbe D."/>
            <person name="Makova K."/>
            <person name="Miller W."/>
            <person name="Nekrutenko A."/>
            <person name="Riemer C."/>
            <person name="Schwartz S."/>
            <person name="Taylor J."/>
            <person name="Yang S."/>
            <person name="Zhang Y."/>
            <person name="Lindpaintner K."/>
            <person name="Andrews T.D."/>
            <person name="Caccamo M."/>
            <person name="Clamp M."/>
            <person name="Clarke L."/>
            <person name="Curwen V."/>
            <person name="Durbin R.M."/>
            <person name="Eyras E."/>
            <person name="Searle S.M."/>
            <person name="Cooper G.M."/>
            <person name="Batzoglou S."/>
            <person name="Brudno M."/>
            <person name="Sidow A."/>
            <person name="Stone E.A."/>
            <person name="Payseur B.A."/>
            <person name="Bourque G."/>
            <person name="Lopez-Otin C."/>
            <person name="Puente X.S."/>
            <person name="Chakrabarti K."/>
            <person name="Chatterji S."/>
            <person name="Dewey C."/>
            <person name="Pachter L."/>
            <person name="Bray N."/>
            <person name="Yap V.B."/>
            <person name="Caspi A."/>
            <person name="Tesler G."/>
            <person name="Pevzner P.A."/>
            <person name="Haussler D."/>
            <person name="Roskin K.M."/>
            <person name="Baertsch R."/>
            <person name="Clawson H."/>
            <person name="Furey T.S."/>
            <person name="Hinrichs A.S."/>
            <person name="Karolchik D."/>
            <person name="Kent W.J."/>
            <person name="Rosenbloom K.R."/>
            <person name="Trumbower H."/>
            <person name="Weirauch M."/>
            <person name="Cooper D.N."/>
            <person name="Stenson P.D."/>
            <person name="Ma B."/>
            <person name="Brent M."/>
            <person name="Arumugam M."/>
            <person name="Shteynberg D."/>
            <person name="Copley R.R."/>
            <person name="Taylor M.S."/>
            <person name="Riethman H."/>
            <person name="Mudunuri U."/>
            <person name="Peterson J."/>
            <person name="Guyer M."/>
            <person name="Felsenfeld A."/>
            <person name="Old S."/>
            <person name="Mockrin S."/>
            <person name="Collins F.S."/>
        </authorList>
    </citation>
    <scope>NUCLEOTIDE SEQUENCE [LARGE SCALE GENOMIC DNA]</scope>
    <source>
        <strain>Brown Norway</strain>
    </source>
</reference>
<reference key="2">
    <citation type="journal article" date="2004" name="Genome Res.">
        <title>The status, quality, and expansion of the NIH full-length cDNA project: the Mammalian Gene Collection (MGC).</title>
        <authorList>
            <consortium name="The MGC Project Team"/>
        </authorList>
    </citation>
    <scope>NUCLEOTIDE SEQUENCE [LARGE SCALE MRNA] (ISOFORM 2)</scope>
    <source>
        <tissue>Thymus</tissue>
    </source>
</reference>